<gene>
    <name evidence="1" type="primary">hslV</name>
    <name type="ordered locus">Smlt4076</name>
</gene>
<name>HSLV_STRMK</name>
<protein>
    <recommendedName>
        <fullName evidence="1">ATP-dependent protease subunit HslV</fullName>
        <ecNumber evidence="1">3.4.25.2</ecNumber>
    </recommendedName>
</protein>
<evidence type="ECO:0000255" key="1">
    <source>
        <dbReference type="HAMAP-Rule" id="MF_00248"/>
    </source>
</evidence>
<sequence length="183" mass="19448">MDPSQNPNVFHATTIVCVRRGEHVAIAGDGQVTLGHTVMKGNARKVRRLGRDGQVLAGFAGAAADAFTLFELFEAKLEKHGQLQRAAVELAKDWRTERRLGKLEALLAVADKETSLIISGTGDVIEPEDGIIAIGSGGSYALSAARALMAHTELDARTIASEAIGIAGDICIYTNRNVVVEEL</sequence>
<reference key="1">
    <citation type="journal article" date="2008" name="Genome Biol.">
        <title>The complete genome, comparative and functional analysis of Stenotrophomonas maltophilia reveals an organism heavily shielded by drug resistance determinants.</title>
        <authorList>
            <person name="Crossman L.C."/>
            <person name="Gould V.C."/>
            <person name="Dow J.M."/>
            <person name="Vernikos G.S."/>
            <person name="Okazaki A."/>
            <person name="Sebaihia M."/>
            <person name="Saunders D."/>
            <person name="Arrowsmith C."/>
            <person name="Carver T."/>
            <person name="Peters N."/>
            <person name="Adlem E."/>
            <person name="Kerhornou A."/>
            <person name="Lord A."/>
            <person name="Murphy L."/>
            <person name="Seeger K."/>
            <person name="Squares R."/>
            <person name="Rutter S."/>
            <person name="Quail M.A."/>
            <person name="Rajandream M.A."/>
            <person name="Harris D."/>
            <person name="Churcher C."/>
            <person name="Bentley S.D."/>
            <person name="Parkhill J."/>
            <person name="Thomson N.R."/>
            <person name="Avison M.B."/>
        </authorList>
    </citation>
    <scope>NUCLEOTIDE SEQUENCE [LARGE SCALE GENOMIC DNA]</scope>
    <source>
        <strain>K279a</strain>
    </source>
</reference>
<keyword id="KW-0021">Allosteric enzyme</keyword>
<keyword id="KW-0963">Cytoplasm</keyword>
<keyword id="KW-0378">Hydrolase</keyword>
<keyword id="KW-0479">Metal-binding</keyword>
<keyword id="KW-0645">Protease</keyword>
<keyword id="KW-1185">Reference proteome</keyword>
<keyword id="KW-0915">Sodium</keyword>
<keyword id="KW-0346">Stress response</keyword>
<keyword id="KW-0888">Threonine protease</keyword>
<feature type="chain" id="PRO_1000100919" description="ATP-dependent protease subunit HslV">
    <location>
        <begin position="1"/>
        <end position="183"/>
    </location>
</feature>
<feature type="active site" evidence="1">
    <location>
        <position position="13"/>
    </location>
</feature>
<feature type="binding site" evidence="1">
    <location>
        <position position="168"/>
    </location>
    <ligand>
        <name>Na(+)</name>
        <dbReference type="ChEBI" id="CHEBI:29101"/>
    </ligand>
</feature>
<feature type="binding site" evidence="1">
    <location>
        <position position="171"/>
    </location>
    <ligand>
        <name>Na(+)</name>
        <dbReference type="ChEBI" id="CHEBI:29101"/>
    </ligand>
</feature>
<feature type="binding site" evidence="1">
    <location>
        <position position="174"/>
    </location>
    <ligand>
        <name>Na(+)</name>
        <dbReference type="ChEBI" id="CHEBI:29101"/>
    </ligand>
</feature>
<comment type="function">
    <text evidence="1">Protease subunit of a proteasome-like degradation complex believed to be a general protein degrading machinery.</text>
</comment>
<comment type="catalytic activity">
    <reaction evidence="1">
        <text>ATP-dependent cleavage of peptide bonds with broad specificity.</text>
        <dbReference type="EC" id="3.4.25.2"/>
    </reaction>
</comment>
<comment type="activity regulation">
    <text evidence="1">Allosterically activated by HslU binding.</text>
</comment>
<comment type="subunit">
    <text evidence="1">A double ring-shaped homohexamer of HslV is capped on each side by a ring-shaped HslU homohexamer. The assembly of the HslU/HslV complex is dependent on binding of ATP.</text>
</comment>
<comment type="subcellular location">
    <subcellularLocation>
        <location evidence="1">Cytoplasm</location>
    </subcellularLocation>
</comment>
<comment type="similarity">
    <text evidence="1">Belongs to the peptidase T1B family. HslV subfamily.</text>
</comment>
<proteinExistence type="inferred from homology"/>
<organism>
    <name type="scientific">Stenotrophomonas maltophilia (strain K279a)</name>
    <dbReference type="NCBI Taxonomy" id="522373"/>
    <lineage>
        <taxon>Bacteria</taxon>
        <taxon>Pseudomonadati</taxon>
        <taxon>Pseudomonadota</taxon>
        <taxon>Gammaproteobacteria</taxon>
        <taxon>Lysobacterales</taxon>
        <taxon>Lysobacteraceae</taxon>
        <taxon>Stenotrophomonas</taxon>
        <taxon>Stenotrophomonas maltophilia group</taxon>
    </lineage>
</organism>
<accession>B2FUV7</accession>
<dbReference type="EC" id="3.4.25.2" evidence="1"/>
<dbReference type="EMBL" id="AM743169">
    <property type="protein sequence ID" value="CAQ47467.1"/>
    <property type="molecule type" value="Genomic_DNA"/>
</dbReference>
<dbReference type="RefSeq" id="WP_005411093.1">
    <property type="nucleotide sequence ID" value="NC_010943.1"/>
</dbReference>
<dbReference type="SMR" id="B2FUV7"/>
<dbReference type="MEROPS" id="T01.006"/>
<dbReference type="EnsemblBacteria" id="CAQ47467">
    <property type="protein sequence ID" value="CAQ47467"/>
    <property type="gene ID" value="Smlt4076"/>
</dbReference>
<dbReference type="GeneID" id="97262714"/>
<dbReference type="KEGG" id="sml:Smlt4076"/>
<dbReference type="eggNOG" id="COG5405">
    <property type="taxonomic scope" value="Bacteria"/>
</dbReference>
<dbReference type="HOGENOM" id="CLU_093872_1_0_6"/>
<dbReference type="Proteomes" id="UP000008840">
    <property type="component" value="Chromosome"/>
</dbReference>
<dbReference type="GO" id="GO:0009376">
    <property type="term" value="C:HslUV protease complex"/>
    <property type="evidence" value="ECO:0007669"/>
    <property type="project" value="UniProtKB-UniRule"/>
</dbReference>
<dbReference type="GO" id="GO:0005839">
    <property type="term" value="C:proteasome core complex"/>
    <property type="evidence" value="ECO:0007669"/>
    <property type="project" value="InterPro"/>
</dbReference>
<dbReference type="GO" id="GO:0046872">
    <property type="term" value="F:metal ion binding"/>
    <property type="evidence" value="ECO:0007669"/>
    <property type="project" value="UniProtKB-KW"/>
</dbReference>
<dbReference type="GO" id="GO:0004298">
    <property type="term" value="F:threonine-type endopeptidase activity"/>
    <property type="evidence" value="ECO:0007669"/>
    <property type="project" value="UniProtKB-KW"/>
</dbReference>
<dbReference type="GO" id="GO:0051603">
    <property type="term" value="P:proteolysis involved in protein catabolic process"/>
    <property type="evidence" value="ECO:0007669"/>
    <property type="project" value="InterPro"/>
</dbReference>
<dbReference type="CDD" id="cd01913">
    <property type="entry name" value="protease_HslV"/>
    <property type="match status" value="1"/>
</dbReference>
<dbReference type="FunFam" id="3.60.20.10:FF:000002">
    <property type="entry name" value="ATP-dependent protease subunit HslV"/>
    <property type="match status" value="1"/>
</dbReference>
<dbReference type="Gene3D" id="3.60.20.10">
    <property type="entry name" value="Glutamine Phosphoribosylpyrophosphate, subunit 1, domain 1"/>
    <property type="match status" value="1"/>
</dbReference>
<dbReference type="HAMAP" id="MF_00248">
    <property type="entry name" value="HslV"/>
    <property type="match status" value="1"/>
</dbReference>
<dbReference type="InterPro" id="IPR022281">
    <property type="entry name" value="ATP-dep_Prtase_HsIV_su"/>
</dbReference>
<dbReference type="InterPro" id="IPR029055">
    <property type="entry name" value="Ntn_hydrolases_N"/>
</dbReference>
<dbReference type="InterPro" id="IPR001353">
    <property type="entry name" value="Proteasome_sua/b"/>
</dbReference>
<dbReference type="InterPro" id="IPR023333">
    <property type="entry name" value="Proteasome_suB-type"/>
</dbReference>
<dbReference type="NCBIfam" id="TIGR03692">
    <property type="entry name" value="ATP_dep_HslV"/>
    <property type="match status" value="1"/>
</dbReference>
<dbReference type="NCBIfam" id="NF003964">
    <property type="entry name" value="PRK05456.1"/>
    <property type="match status" value="1"/>
</dbReference>
<dbReference type="PANTHER" id="PTHR32194:SF0">
    <property type="entry name" value="ATP-DEPENDENT PROTEASE SUBUNIT HSLV"/>
    <property type="match status" value="1"/>
</dbReference>
<dbReference type="PANTHER" id="PTHR32194">
    <property type="entry name" value="METALLOPROTEASE TLDD"/>
    <property type="match status" value="1"/>
</dbReference>
<dbReference type="Pfam" id="PF00227">
    <property type="entry name" value="Proteasome"/>
    <property type="match status" value="1"/>
</dbReference>
<dbReference type="PIRSF" id="PIRSF039093">
    <property type="entry name" value="HslV"/>
    <property type="match status" value="1"/>
</dbReference>
<dbReference type="SUPFAM" id="SSF56235">
    <property type="entry name" value="N-terminal nucleophile aminohydrolases (Ntn hydrolases)"/>
    <property type="match status" value="1"/>
</dbReference>
<dbReference type="PROSITE" id="PS51476">
    <property type="entry name" value="PROTEASOME_BETA_2"/>
    <property type="match status" value="1"/>
</dbReference>